<dbReference type="EC" id="2.5.1.72" evidence="1"/>
<dbReference type="EMBL" id="AE009441">
    <property type="protein sequence ID" value="AAL64683.1"/>
    <property type="molecule type" value="Genomic_DNA"/>
</dbReference>
<dbReference type="RefSeq" id="WP_011009151.1">
    <property type="nucleotide sequence ID" value="NC_003364.1"/>
</dbReference>
<dbReference type="SMR" id="Q8ZTS6"/>
<dbReference type="FunCoup" id="Q8ZTS6">
    <property type="interactions" value="72"/>
</dbReference>
<dbReference type="STRING" id="178306.PAE3115"/>
<dbReference type="EnsemblBacteria" id="AAL64683">
    <property type="protein sequence ID" value="AAL64683"/>
    <property type="gene ID" value="PAE3115"/>
</dbReference>
<dbReference type="GeneID" id="1463859"/>
<dbReference type="KEGG" id="pai:PAE3115"/>
<dbReference type="PATRIC" id="fig|178306.9.peg.2342"/>
<dbReference type="eggNOG" id="arCOG04459">
    <property type="taxonomic scope" value="Archaea"/>
</dbReference>
<dbReference type="HOGENOM" id="CLU_047382_0_0_2"/>
<dbReference type="InParanoid" id="Q8ZTS6"/>
<dbReference type="UniPathway" id="UPA00253">
    <property type="reaction ID" value="UER00327"/>
</dbReference>
<dbReference type="Proteomes" id="UP000002439">
    <property type="component" value="Chromosome"/>
</dbReference>
<dbReference type="GO" id="GO:0005737">
    <property type="term" value="C:cytoplasm"/>
    <property type="evidence" value="ECO:0007669"/>
    <property type="project" value="UniProtKB-SubCell"/>
</dbReference>
<dbReference type="GO" id="GO:0051539">
    <property type="term" value="F:4 iron, 4 sulfur cluster binding"/>
    <property type="evidence" value="ECO:0000318"/>
    <property type="project" value="GO_Central"/>
</dbReference>
<dbReference type="GO" id="GO:0046872">
    <property type="term" value="F:metal ion binding"/>
    <property type="evidence" value="ECO:0007669"/>
    <property type="project" value="UniProtKB-KW"/>
</dbReference>
<dbReference type="GO" id="GO:0008987">
    <property type="term" value="F:quinolinate synthetase A activity"/>
    <property type="evidence" value="ECO:0000318"/>
    <property type="project" value="GO_Central"/>
</dbReference>
<dbReference type="GO" id="GO:0034628">
    <property type="term" value="P:'de novo' NAD biosynthetic process from L-aspartate"/>
    <property type="evidence" value="ECO:0000318"/>
    <property type="project" value="GO_Central"/>
</dbReference>
<dbReference type="Gene3D" id="3.40.50.10800">
    <property type="entry name" value="NadA-like"/>
    <property type="match status" value="3"/>
</dbReference>
<dbReference type="HAMAP" id="MF_00568">
    <property type="entry name" value="NadA_type2"/>
    <property type="match status" value="1"/>
</dbReference>
<dbReference type="InterPro" id="IPR003473">
    <property type="entry name" value="NadA"/>
</dbReference>
<dbReference type="InterPro" id="IPR036094">
    <property type="entry name" value="NadA_sf"/>
</dbReference>
<dbReference type="InterPro" id="IPR023066">
    <property type="entry name" value="Quinolinate_synth_type2"/>
</dbReference>
<dbReference type="NCBIfam" id="TIGR00550">
    <property type="entry name" value="nadA"/>
    <property type="match status" value="1"/>
</dbReference>
<dbReference type="NCBIfam" id="NF006878">
    <property type="entry name" value="PRK09375.1-2"/>
    <property type="match status" value="1"/>
</dbReference>
<dbReference type="NCBIfam" id="NF006879">
    <property type="entry name" value="PRK09375.1-4"/>
    <property type="match status" value="1"/>
</dbReference>
<dbReference type="PANTHER" id="PTHR30573:SF0">
    <property type="entry name" value="QUINOLINATE SYNTHASE, CHLOROPLASTIC"/>
    <property type="match status" value="1"/>
</dbReference>
<dbReference type="PANTHER" id="PTHR30573">
    <property type="entry name" value="QUINOLINATE SYNTHETASE A"/>
    <property type="match status" value="1"/>
</dbReference>
<dbReference type="Pfam" id="PF02445">
    <property type="entry name" value="NadA"/>
    <property type="match status" value="1"/>
</dbReference>
<dbReference type="SUPFAM" id="SSF142754">
    <property type="entry name" value="NadA-like"/>
    <property type="match status" value="1"/>
</dbReference>
<sequence length="307" mass="34251">MLKEEVLRLKREKNAVILAHNYQLPEVKDVADFIGDSLNLSMEAARTKADIIVFAGVYFMAETAAILNPDKKVLIPDPGAGCSLASSVSAADVLEWRRRHPNGVVVAYINTYAEVKAVSDYVCTSANCLKIIEAIPSDRPVLFLPDKYLGLYIKAKTGREIDIWDGECHVHAKITSPKITAKIKLYRDAEVLIHPECGCGTACLLELPKMGLSPKFLSTEGMVKYVKQSPARRFIIATEVGIIDRLEREAPGKEYIPAAEDAICEYMKLITLDKVHRSLKEEIYRVVVPEDIAKKARLAIERMFEFA</sequence>
<name>NADA_PYRAE</name>
<gene>
    <name evidence="1" type="primary">nadA</name>
    <name type="ordered locus">PAE3115</name>
</gene>
<keyword id="KW-0004">4Fe-4S</keyword>
<keyword id="KW-0963">Cytoplasm</keyword>
<keyword id="KW-0408">Iron</keyword>
<keyword id="KW-0411">Iron-sulfur</keyword>
<keyword id="KW-0479">Metal-binding</keyword>
<keyword id="KW-0662">Pyridine nucleotide biosynthesis</keyword>
<keyword id="KW-1185">Reference proteome</keyword>
<keyword id="KW-0808">Transferase</keyword>
<accession>Q8ZTS6</accession>
<organism>
    <name type="scientific">Pyrobaculum aerophilum (strain ATCC 51768 / DSM 7523 / JCM 9630 / CIP 104966 / NBRC 100827 / IM2)</name>
    <dbReference type="NCBI Taxonomy" id="178306"/>
    <lineage>
        <taxon>Archaea</taxon>
        <taxon>Thermoproteota</taxon>
        <taxon>Thermoprotei</taxon>
        <taxon>Thermoproteales</taxon>
        <taxon>Thermoproteaceae</taxon>
        <taxon>Pyrobaculum</taxon>
    </lineage>
</organism>
<feature type="chain" id="PRO_0000155808" description="Quinolinate synthase">
    <location>
        <begin position="1"/>
        <end position="307"/>
    </location>
</feature>
<feature type="binding site" evidence="1">
    <location>
        <position position="20"/>
    </location>
    <ligand>
        <name>iminosuccinate</name>
        <dbReference type="ChEBI" id="CHEBI:77875"/>
    </ligand>
</feature>
<feature type="binding site" evidence="1">
    <location>
        <position position="37"/>
    </location>
    <ligand>
        <name>iminosuccinate</name>
        <dbReference type="ChEBI" id="CHEBI:77875"/>
    </ligand>
</feature>
<feature type="binding site" evidence="1">
    <location>
        <position position="82"/>
    </location>
    <ligand>
        <name>[4Fe-4S] cluster</name>
        <dbReference type="ChEBI" id="CHEBI:49883"/>
    </ligand>
</feature>
<feature type="binding site" evidence="1">
    <location>
        <begin position="108"/>
        <end position="110"/>
    </location>
    <ligand>
        <name>iminosuccinate</name>
        <dbReference type="ChEBI" id="CHEBI:77875"/>
    </ligand>
</feature>
<feature type="binding site" evidence="1">
    <location>
        <position position="125"/>
    </location>
    <ligand>
        <name>iminosuccinate</name>
        <dbReference type="ChEBI" id="CHEBI:77875"/>
    </ligand>
</feature>
<feature type="binding site" evidence="1">
    <location>
        <position position="168"/>
    </location>
    <ligand>
        <name>[4Fe-4S] cluster</name>
        <dbReference type="ChEBI" id="CHEBI:49883"/>
    </ligand>
</feature>
<feature type="binding site" evidence="1">
    <location>
        <begin position="194"/>
        <end position="196"/>
    </location>
    <ligand>
        <name>iminosuccinate</name>
        <dbReference type="ChEBI" id="CHEBI:77875"/>
    </ligand>
</feature>
<feature type="binding site" evidence="1">
    <location>
        <position position="219"/>
    </location>
    <ligand>
        <name>iminosuccinate</name>
        <dbReference type="ChEBI" id="CHEBI:77875"/>
    </ligand>
</feature>
<feature type="binding site" evidence="1">
    <location>
        <position position="264"/>
    </location>
    <ligand>
        <name>[4Fe-4S] cluster</name>
        <dbReference type="ChEBI" id="CHEBI:49883"/>
    </ligand>
</feature>
<comment type="function">
    <text evidence="1">Catalyzes the condensation of iminoaspartate with dihydroxyacetone phosphate to form quinolinate.</text>
</comment>
<comment type="catalytic activity">
    <reaction evidence="1">
        <text>iminosuccinate + dihydroxyacetone phosphate = quinolinate + phosphate + 2 H2O + H(+)</text>
        <dbReference type="Rhea" id="RHEA:25888"/>
        <dbReference type="ChEBI" id="CHEBI:15377"/>
        <dbReference type="ChEBI" id="CHEBI:15378"/>
        <dbReference type="ChEBI" id="CHEBI:29959"/>
        <dbReference type="ChEBI" id="CHEBI:43474"/>
        <dbReference type="ChEBI" id="CHEBI:57642"/>
        <dbReference type="ChEBI" id="CHEBI:77875"/>
        <dbReference type="EC" id="2.5.1.72"/>
    </reaction>
    <physiologicalReaction direction="left-to-right" evidence="1">
        <dbReference type="Rhea" id="RHEA:25889"/>
    </physiologicalReaction>
</comment>
<comment type="cofactor">
    <cofactor evidence="1">
        <name>[4Fe-4S] cluster</name>
        <dbReference type="ChEBI" id="CHEBI:49883"/>
    </cofactor>
    <text evidence="1">Binds 1 [4Fe-4S] cluster per subunit.</text>
</comment>
<comment type="pathway">
    <text evidence="1">Cofactor biosynthesis; NAD(+) biosynthesis; quinolinate from iminoaspartate: step 1/1.</text>
</comment>
<comment type="subcellular location">
    <subcellularLocation>
        <location evidence="1">Cytoplasm</location>
    </subcellularLocation>
</comment>
<comment type="similarity">
    <text evidence="1">Belongs to the quinolinate synthase family. Type 2 subfamily.</text>
</comment>
<evidence type="ECO:0000255" key="1">
    <source>
        <dbReference type="HAMAP-Rule" id="MF_00568"/>
    </source>
</evidence>
<proteinExistence type="inferred from homology"/>
<protein>
    <recommendedName>
        <fullName evidence="1">Quinolinate synthase</fullName>
        <ecNumber evidence="1">2.5.1.72</ecNumber>
    </recommendedName>
</protein>
<reference key="1">
    <citation type="journal article" date="2002" name="Proc. Natl. Acad. Sci. U.S.A.">
        <title>Genome sequence of the hyperthermophilic crenarchaeon Pyrobaculum aerophilum.</title>
        <authorList>
            <person name="Fitz-Gibbon S.T."/>
            <person name="Ladner H."/>
            <person name="Kim U.-J."/>
            <person name="Stetter K.O."/>
            <person name="Simon M.I."/>
            <person name="Miller J.H."/>
        </authorList>
    </citation>
    <scope>NUCLEOTIDE SEQUENCE [LARGE SCALE GENOMIC DNA]</scope>
    <source>
        <strain>ATCC 51768 / DSM 7523 / JCM 9630 / CIP 104966 / NBRC 100827 / IM2</strain>
    </source>
</reference>